<protein>
    <recommendedName>
        <fullName evidence="1">NAD(P)H-quinone oxidoreductase chain 4, chloroplastic</fullName>
        <ecNumber evidence="1">7.1.1.-</ecNumber>
    </recommendedName>
    <alternativeName>
        <fullName evidence="1">NAD(P)H dehydrogenase, chain 4</fullName>
    </alternativeName>
    <alternativeName>
        <fullName evidence="1">NADH-plastoquinone oxidoreductase chain 4</fullName>
    </alternativeName>
</protein>
<proteinExistence type="inferred from homology"/>
<evidence type="ECO:0000255" key="1">
    <source>
        <dbReference type="HAMAP-Rule" id="MF_00491"/>
    </source>
</evidence>
<feature type="chain" id="PRO_0000118026" description="NAD(P)H-quinone oxidoreductase chain 4, chloroplastic">
    <location>
        <begin position="1"/>
        <end position="501"/>
    </location>
</feature>
<feature type="transmembrane region" description="Helical" evidence="1">
    <location>
        <begin position="4"/>
        <end position="24"/>
    </location>
</feature>
<feature type="transmembrane region" description="Helical" evidence="1">
    <location>
        <begin position="35"/>
        <end position="55"/>
    </location>
</feature>
<feature type="transmembrane region" description="Helical" evidence="1">
    <location>
        <begin position="87"/>
        <end position="107"/>
    </location>
</feature>
<feature type="transmembrane region" description="Helical" evidence="1">
    <location>
        <begin position="113"/>
        <end position="133"/>
    </location>
</feature>
<feature type="transmembrane region" description="Helical" evidence="1">
    <location>
        <begin position="134"/>
        <end position="154"/>
    </location>
</feature>
<feature type="transmembrane region" description="Helical" evidence="1">
    <location>
        <begin position="167"/>
        <end position="187"/>
    </location>
</feature>
<feature type="transmembrane region" description="Helical" evidence="1">
    <location>
        <begin position="211"/>
        <end position="231"/>
    </location>
</feature>
<feature type="transmembrane region" description="Helical" evidence="1">
    <location>
        <begin position="242"/>
        <end position="262"/>
    </location>
</feature>
<feature type="transmembrane region" description="Helical" evidence="1">
    <location>
        <begin position="274"/>
        <end position="294"/>
    </location>
</feature>
<feature type="transmembrane region" description="Helical" evidence="1">
    <location>
        <begin position="310"/>
        <end position="330"/>
    </location>
</feature>
<feature type="transmembrane region" description="Helical" evidence="1">
    <location>
        <begin position="331"/>
        <end position="351"/>
    </location>
</feature>
<feature type="transmembrane region" description="Helical" evidence="1">
    <location>
        <begin position="386"/>
        <end position="406"/>
    </location>
</feature>
<feature type="transmembrane region" description="Helical" evidence="1">
    <location>
        <begin position="416"/>
        <end position="436"/>
    </location>
</feature>
<feature type="transmembrane region" description="Helical" evidence="1">
    <location>
        <begin position="464"/>
        <end position="484"/>
    </location>
</feature>
<reference key="1">
    <citation type="journal article" date="2003" name="Nucleic Acids Res.">
        <title>Complete chloroplast DNA sequence of the moss Physcomitrella patens: evidence for the loss and relocation of rpoA from the chloroplast to the nucleus.</title>
        <authorList>
            <person name="Sugiura C."/>
            <person name="Kobayashi Y."/>
            <person name="Setsuyuki A."/>
            <person name="Sugita C."/>
            <person name="Sugita M."/>
        </authorList>
    </citation>
    <scope>NUCLEOTIDE SEQUENCE [LARGE SCALE GENOMIC DNA]</scope>
    <source>
        <strain>cv. Gransden 2004</strain>
    </source>
</reference>
<geneLocation type="chloroplast"/>
<accession>Q6YXQ3</accession>
<keyword id="KW-0150">Chloroplast</keyword>
<keyword id="KW-0472">Membrane</keyword>
<keyword id="KW-0520">NAD</keyword>
<keyword id="KW-0521">NADP</keyword>
<keyword id="KW-0934">Plastid</keyword>
<keyword id="KW-0618">Plastoquinone</keyword>
<keyword id="KW-0874">Quinone</keyword>
<keyword id="KW-1185">Reference proteome</keyword>
<keyword id="KW-0793">Thylakoid</keyword>
<keyword id="KW-1278">Translocase</keyword>
<keyword id="KW-0812">Transmembrane</keyword>
<keyword id="KW-1133">Transmembrane helix</keyword>
<comment type="catalytic activity">
    <reaction evidence="1">
        <text>a plastoquinone + NADH + (n+1) H(+)(in) = a plastoquinol + NAD(+) + n H(+)(out)</text>
        <dbReference type="Rhea" id="RHEA:42608"/>
        <dbReference type="Rhea" id="RHEA-COMP:9561"/>
        <dbReference type="Rhea" id="RHEA-COMP:9562"/>
        <dbReference type="ChEBI" id="CHEBI:15378"/>
        <dbReference type="ChEBI" id="CHEBI:17757"/>
        <dbReference type="ChEBI" id="CHEBI:57540"/>
        <dbReference type="ChEBI" id="CHEBI:57945"/>
        <dbReference type="ChEBI" id="CHEBI:62192"/>
    </reaction>
</comment>
<comment type="catalytic activity">
    <reaction evidence="1">
        <text>a plastoquinone + NADPH + (n+1) H(+)(in) = a plastoquinol + NADP(+) + n H(+)(out)</text>
        <dbReference type="Rhea" id="RHEA:42612"/>
        <dbReference type="Rhea" id="RHEA-COMP:9561"/>
        <dbReference type="Rhea" id="RHEA-COMP:9562"/>
        <dbReference type="ChEBI" id="CHEBI:15378"/>
        <dbReference type="ChEBI" id="CHEBI:17757"/>
        <dbReference type="ChEBI" id="CHEBI:57783"/>
        <dbReference type="ChEBI" id="CHEBI:58349"/>
        <dbReference type="ChEBI" id="CHEBI:62192"/>
    </reaction>
</comment>
<comment type="subcellular location">
    <subcellularLocation>
        <location evidence="1">Plastid</location>
        <location evidence="1">Chloroplast thylakoid membrane</location>
        <topology evidence="1">Multi-pass membrane protein</topology>
    </subcellularLocation>
</comment>
<comment type="similarity">
    <text evidence="1">Belongs to the complex I subunit 4 family.</text>
</comment>
<organism>
    <name type="scientific">Physcomitrium patens</name>
    <name type="common">Spreading-leaved earth moss</name>
    <name type="synonym">Physcomitrella patens</name>
    <dbReference type="NCBI Taxonomy" id="3218"/>
    <lineage>
        <taxon>Eukaryota</taxon>
        <taxon>Viridiplantae</taxon>
        <taxon>Streptophyta</taxon>
        <taxon>Embryophyta</taxon>
        <taxon>Bryophyta</taxon>
        <taxon>Bryophytina</taxon>
        <taxon>Bryopsida</taxon>
        <taxon>Funariidae</taxon>
        <taxon>Funariales</taxon>
        <taxon>Funariaceae</taxon>
        <taxon>Physcomitrium</taxon>
    </lineage>
</organism>
<name>NU4C_PHYPA</name>
<sequence>MSNFPWLTTIVLLPVFAGCVIPFFPNKGNNLIRWYTLGVCLLEFLLITYVFCYYFKFDDPIIQLKEDYNWIDFLDFHWRLGIDGLSIGLILLTGFITTLATLAAWPVTRNPRLFYFLMLAMYSGQVGLFASQDILLFFFMWELELIPVYLLLCIWGGKRRLYATTKFILYTAGGSIFILMGALTMGFYGSNQLTLDFQNLSNKSYPLELEIILYLGFFIAYAVKLPIFPLHTWLPDTHGEAHYSTCMLLAGILLKMGGYGLIRINMELLPHAHSIFAPWIVAVGAIQIVYAALISFSQRNLKRRIAYSSISHMGFVLIGIGSMTDVGLNGAILQMVSHGLIGAALFFLAGITYDRTRTLFLDQMGGTAIYMPKIFTMFSSFSMASLALPGMSGFVAEFLVFLGIVVSNKYSFNFKILVTIIEAIGIILTPIYLLSMLRQMFYGYKFSKFTTFSNSNMDAGPREIFILVCLIFPIVGIGLYPNSVLSLWNSKVSFILSKFIV</sequence>
<dbReference type="EC" id="7.1.1.-" evidence="1"/>
<dbReference type="EMBL" id="AP005672">
    <property type="protein sequence ID" value="BAC85088.1"/>
    <property type="molecule type" value="Genomic_DNA"/>
</dbReference>
<dbReference type="RefSeq" id="NP_904238.1">
    <property type="nucleotide sequence ID" value="NC_005087.2"/>
</dbReference>
<dbReference type="SMR" id="Q6YXQ3"/>
<dbReference type="FunCoup" id="Q6YXQ3">
    <property type="interactions" value="14"/>
</dbReference>
<dbReference type="STRING" id="3218.Q6YXQ3"/>
<dbReference type="PaxDb" id="3218-PP1S84_200V6.1"/>
<dbReference type="GeneID" id="2546706"/>
<dbReference type="KEGG" id="ppp:2546706"/>
<dbReference type="eggNOG" id="KOG4845">
    <property type="taxonomic scope" value="Eukaryota"/>
</dbReference>
<dbReference type="InParanoid" id="Q6YXQ3"/>
<dbReference type="OrthoDB" id="564260at2759"/>
<dbReference type="Proteomes" id="UP000006727">
    <property type="component" value="Chloroplast"/>
</dbReference>
<dbReference type="GO" id="GO:0009535">
    <property type="term" value="C:chloroplast thylakoid membrane"/>
    <property type="evidence" value="ECO:0007669"/>
    <property type="project" value="UniProtKB-SubCell"/>
</dbReference>
<dbReference type="GO" id="GO:0008137">
    <property type="term" value="F:NADH dehydrogenase (ubiquinone) activity"/>
    <property type="evidence" value="ECO:0007669"/>
    <property type="project" value="InterPro"/>
</dbReference>
<dbReference type="GO" id="GO:0048039">
    <property type="term" value="F:ubiquinone binding"/>
    <property type="evidence" value="ECO:0000318"/>
    <property type="project" value="GO_Central"/>
</dbReference>
<dbReference type="GO" id="GO:0009060">
    <property type="term" value="P:aerobic respiration"/>
    <property type="evidence" value="ECO:0000318"/>
    <property type="project" value="GO_Central"/>
</dbReference>
<dbReference type="GO" id="GO:0042773">
    <property type="term" value="P:ATP synthesis coupled electron transport"/>
    <property type="evidence" value="ECO:0007669"/>
    <property type="project" value="InterPro"/>
</dbReference>
<dbReference type="GO" id="GO:0015990">
    <property type="term" value="P:electron transport coupled proton transport"/>
    <property type="evidence" value="ECO:0000318"/>
    <property type="project" value="GO_Central"/>
</dbReference>
<dbReference type="HAMAP" id="MF_00491">
    <property type="entry name" value="NDH1_NuoM"/>
    <property type="match status" value="1"/>
</dbReference>
<dbReference type="InterPro" id="IPR022997">
    <property type="entry name" value="NADH_Q_OxRdtase_chain4"/>
</dbReference>
<dbReference type="InterPro" id="IPR010227">
    <property type="entry name" value="NADH_Q_OxRdtase_chainM/4"/>
</dbReference>
<dbReference type="InterPro" id="IPR003918">
    <property type="entry name" value="NADH_UbQ_OxRdtase"/>
</dbReference>
<dbReference type="InterPro" id="IPR001750">
    <property type="entry name" value="ND/Mrp_TM"/>
</dbReference>
<dbReference type="NCBIfam" id="TIGR01972">
    <property type="entry name" value="NDH_I_M"/>
    <property type="match status" value="1"/>
</dbReference>
<dbReference type="NCBIfam" id="NF009212">
    <property type="entry name" value="PRK12561.1"/>
    <property type="match status" value="1"/>
</dbReference>
<dbReference type="PANTHER" id="PTHR43507:SF21">
    <property type="entry name" value="NAD(P)H-QUINONE OXIDOREDUCTASE CHAIN 4, CHLOROPLASTIC"/>
    <property type="match status" value="1"/>
</dbReference>
<dbReference type="PANTHER" id="PTHR43507">
    <property type="entry name" value="NADH-UBIQUINONE OXIDOREDUCTASE CHAIN 4"/>
    <property type="match status" value="1"/>
</dbReference>
<dbReference type="Pfam" id="PF00361">
    <property type="entry name" value="Proton_antipo_M"/>
    <property type="match status" value="1"/>
</dbReference>
<dbReference type="PRINTS" id="PR01437">
    <property type="entry name" value="NUOXDRDTASE4"/>
</dbReference>
<gene>
    <name evidence="1" type="primary">ndhD</name>
</gene>